<comment type="catalytic activity">
    <reaction evidence="1">
        <text>D-arabinose 5-phosphate + phosphoenolpyruvate + H2O = 3-deoxy-alpha-D-manno-2-octulosonate-8-phosphate + phosphate</text>
        <dbReference type="Rhea" id="RHEA:14053"/>
        <dbReference type="ChEBI" id="CHEBI:15377"/>
        <dbReference type="ChEBI" id="CHEBI:43474"/>
        <dbReference type="ChEBI" id="CHEBI:57693"/>
        <dbReference type="ChEBI" id="CHEBI:58702"/>
        <dbReference type="ChEBI" id="CHEBI:85985"/>
        <dbReference type="EC" id="2.5.1.55"/>
    </reaction>
</comment>
<comment type="pathway">
    <text evidence="1">Carbohydrate biosynthesis; 3-deoxy-D-manno-octulosonate biosynthesis; 3-deoxy-D-manno-octulosonate from D-ribulose 5-phosphate: step 2/3.</text>
</comment>
<comment type="pathway">
    <text evidence="1">Bacterial outer membrane biogenesis; lipopolysaccharide biosynthesis.</text>
</comment>
<comment type="subcellular location">
    <subcellularLocation>
        <location evidence="1">Cytoplasm</location>
    </subcellularLocation>
</comment>
<comment type="similarity">
    <text evidence="1">Belongs to the KdsA family.</text>
</comment>
<sequence>MSQPNVSVKVGNVVFSNKAPLSLIVGPCQIESRDHAFEMAGRIKAIADQAGIGFVYKSSYDKANRTSLSAARGIGLEKAIAIFADLKKEFGFPILTDVHTEEQCRAVSSVVDVLQIPAFLCRQTDLLVAAAKTGCVINIKKGQFLAPWDMENVLKKVTQSGNPDVMLCERGTSFGYNRLVSDMRSLPIMSSFGAPVIFDATHSVQEPGGKGDSSGGQRQFVEILARAAVAVGVAGIFLETHQDPDNAPSDGANMIEIDNLQRLIEILMNFDRLTKNELNIHA</sequence>
<dbReference type="EC" id="2.5.1.55" evidence="1"/>
<dbReference type="EMBL" id="CP000524">
    <property type="protein sequence ID" value="ABM45460.1"/>
    <property type="molecule type" value="Genomic_DNA"/>
</dbReference>
<dbReference type="RefSeq" id="WP_005766656.1">
    <property type="nucleotide sequence ID" value="NC_008783.1"/>
</dbReference>
<dbReference type="SMR" id="A1US93"/>
<dbReference type="STRING" id="360095.BARBAKC583_0531"/>
<dbReference type="GeneID" id="4684922"/>
<dbReference type="KEGG" id="bbk:BARBAKC583_0531"/>
<dbReference type="PATRIC" id="fig|360095.6.peg.515"/>
<dbReference type="eggNOG" id="COG2877">
    <property type="taxonomic scope" value="Bacteria"/>
</dbReference>
<dbReference type="HOGENOM" id="CLU_036666_0_0_5"/>
<dbReference type="OrthoDB" id="9776934at2"/>
<dbReference type="UniPathway" id="UPA00030"/>
<dbReference type="UniPathway" id="UPA00357">
    <property type="reaction ID" value="UER00474"/>
</dbReference>
<dbReference type="Proteomes" id="UP000000643">
    <property type="component" value="Chromosome"/>
</dbReference>
<dbReference type="GO" id="GO:0005737">
    <property type="term" value="C:cytoplasm"/>
    <property type="evidence" value="ECO:0007669"/>
    <property type="project" value="UniProtKB-SubCell"/>
</dbReference>
<dbReference type="GO" id="GO:0008676">
    <property type="term" value="F:3-deoxy-8-phosphooctulonate synthase activity"/>
    <property type="evidence" value="ECO:0007669"/>
    <property type="project" value="UniProtKB-UniRule"/>
</dbReference>
<dbReference type="GO" id="GO:0019294">
    <property type="term" value="P:keto-3-deoxy-D-manno-octulosonic acid biosynthetic process"/>
    <property type="evidence" value="ECO:0007669"/>
    <property type="project" value="UniProtKB-UniRule"/>
</dbReference>
<dbReference type="Gene3D" id="3.20.20.70">
    <property type="entry name" value="Aldolase class I"/>
    <property type="match status" value="1"/>
</dbReference>
<dbReference type="HAMAP" id="MF_00056">
    <property type="entry name" value="KDO8P_synth"/>
    <property type="match status" value="1"/>
</dbReference>
<dbReference type="InterPro" id="IPR013785">
    <property type="entry name" value="Aldolase_TIM"/>
</dbReference>
<dbReference type="InterPro" id="IPR006218">
    <property type="entry name" value="DAHP1/KDSA"/>
</dbReference>
<dbReference type="InterPro" id="IPR006269">
    <property type="entry name" value="KDO8P_synthase"/>
</dbReference>
<dbReference type="NCBIfam" id="TIGR01362">
    <property type="entry name" value="KDO8P_synth"/>
    <property type="match status" value="1"/>
</dbReference>
<dbReference type="NCBIfam" id="NF003543">
    <property type="entry name" value="PRK05198.1"/>
    <property type="match status" value="1"/>
</dbReference>
<dbReference type="PANTHER" id="PTHR21057">
    <property type="entry name" value="PHOSPHO-2-DEHYDRO-3-DEOXYHEPTONATE ALDOLASE"/>
    <property type="match status" value="1"/>
</dbReference>
<dbReference type="Pfam" id="PF00793">
    <property type="entry name" value="DAHP_synth_1"/>
    <property type="match status" value="1"/>
</dbReference>
<dbReference type="SUPFAM" id="SSF51569">
    <property type="entry name" value="Aldolase"/>
    <property type="match status" value="1"/>
</dbReference>
<protein>
    <recommendedName>
        <fullName evidence="1">2-dehydro-3-deoxyphosphooctonate aldolase</fullName>
        <ecNumber evidence="1">2.5.1.55</ecNumber>
    </recommendedName>
    <alternativeName>
        <fullName evidence="1">3-deoxy-D-manno-octulosonic acid 8-phosphate synthase</fullName>
    </alternativeName>
    <alternativeName>
        <fullName evidence="1">KDO-8-phosphate synthase</fullName>
        <shortName evidence="1">KDO 8-P synthase</shortName>
        <shortName evidence="1">KDOPS</shortName>
    </alternativeName>
    <alternativeName>
        <fullName evidence="1">Phospho-2-dehydro-3-deoxyoctonate aldolase</fullName>
    </alternativeName>
</protein>
<keyword id="KW-0963">Cytoplasm</keyword>
<keyword id="KW-0448">Lipopolysaccharide biosynthesis</keyword>
<keyword id="KW-0808">Transferase</keyword>
<name>KDSA_BARBK</name>
<accession>A1US93</accession>
<proteinExistence type="inferred from homology"/>
<evidence type="ECO:0000255" key="1">
    <source>
        <dbReference type="HAMAP-Rule" id="MF_00056"/>
    </source>
</evidence>
<gene>
    <name evidence="1" type="primary">kdsA</name>
    <name type="ordered locus">BARBAKC583_0531</name>
</gene>
<organism>
    <name type="scientific">Bartonella bacilliformis (strain ATCC 35685 / KC583 / Herrer 020/F12,63)</name>
    <dbReference type="NCBI Taxonomy" id="360095"/>
    <lineage>
        <taxon>Bacteria</taxon>
        <taxon>Pseudomonadati</taxon>
        <taxon>Pseudomonadota</taxon>
        <taxon>Alphaproteobacteria</taxon>
        <taxon>Hyphomicrobiales</taxon>
        <taxon>Bartonellaceae</taxon>
        <taxon>Bartonella</taxon>
    </lineage>
</organism>
<feature type="chain" id="PRO_0000304432" description="2-dehydro-3-deoxyphosphooctonate aldolase">
    <location>
        <begin position="1"/>
        <end position="282"/>
    </location>
</feature>
<reference key="1">
    <citation type="submission" date="2006-12" db="EMBL/GenBank/DDBJ databases">
        <authorList>
            <person name="Hendrix L."/>
            <person name="Mohamoud Y."/>
            <person name="Radune D."/>
            <person name="Shvartsbeyn A."/>
            <person name="Daugherty S."/>
            <person name="Dodson R."/>
            <person name="Durkin A.S."/>
            <person name="Harkins D."/>
            <person name="Huot H."/>
            <person name="Kothari S.P."/>
            <person name="Madupu R."/>
            <person name="Li J."/>
            <person name="Nelson W.C."/>
            <person name="Shrivastava S."/>
            <person name="Giglio M.G."/>
            <person name="Haft D."/>
            <person name="Selengut J."/>
            <person name="Fraser-Ligget C."/>
            <person name="Seshadri R."/>
        </authorList>
    </citation>
    <scope>NUCLEOTIDE SEQUENCE [LARGE SCALE GENOMIC DNA]</scope>
    <source>
        <strain>ATCC 35685 / KC583 / Herrer 020/F12,63</strain>
    </source>
</reference>